<keyword id="KW-0007">Acetylation</keyword>
<keyword id="KW-0965">Cell junction</keyword>
<keyword id="KW-0963">Cytoplasm</keyword>
<keyword id="KW-1017">Isopeptide bond</keyword>
<keyword id="KW-0488">Methylation</keyword>
<keyword id="KW-0539">Nucleus</keyword>
<keyword id="KW-0597">Phosphoprotein</keyword>
<keyword id="KW-1185">Reference proteome</keyword>
<keyword id="KW-0804">Transcription</keyword>
<keyword id="KW-0805">Transcription regulation</keyword>
<keyword id="KW-0818">Triplet repeat expansion</keyword>
<keyword id="KW-0832">Ubl conjugation</keyword>
<feature type="chain" id="PRO_0000356253" description="Atrophin-1">
    <location>
        <begin position="1"/>
        <end position="1175"/>
    </location>
</feature>
<feature type="region of interest" description="Disordered" evidence="5">
    <location>
        <begin position="1"/>
        <end position="595"/>
    </location>
</feature>
<feature type="region of interest" description="Involved in binding BAIAP2" evidence="1">
    <location>
        <begin position="503"/>
        <end position="553"/>
    </location>
</feature>
<feature type="region of interest" description="Disordered" evidence="5">
    <location>
        <begin position="608"/>
        <end position="752"/>
    </location>
</feature>
<feature type="region of interest" description="Disordered" evidence="5">
    <location>
        <begin position="770"/>
        <end position="847"/>
    </location>
</feature>
<feature type="region of interest" description="Required for interaction with FAT1" evidence="1">
    <location>
        <begin position="864"/>
        <end position="879"/>
    </location>
</feature>
<feature type="region of interest" description="Disordered" evidence="5">
    <location>
        <begin position="913"/>
        <end position="932"/>
    </location>
</feature>
<feature type="short sequence motif" description="Nuclear localization signal" evidence="1">
    <location>
        <begin position="16"/>
        <end position="32"/>
    </location>
</feature>
<feature type="short sequence motif" description="Nuclear export signal" evidence="1">
    <location>
        <begin position="1018"/>
        <end position="1026"/>
    </location>
</feature>
<feature type="compositionally biased region" description="Basic and acidic residues" evidence="5">
    <location>
        <begin position="17"/>
        <end position="29"/>
    </location>
</feature>
<feature type="compositionally biased region" description="Basic and acidic residues" evidence="5">
    <location>
        <begin position="45"/>
        <end position="63"/>
    </location>
</feature>
<feature type="compositionally biased region" description="Basic and acidic residues" evidence="5">
    <location>
        <begin position="108"/>
        <end position="128"/>
    </location>
</feature>
<feature type="compositionally biased region" description="Polar residues" evidence="5">
    <location>
        <begin position="129"/>
        <end position="152"/>
    </location>
</feature>
<feature type="compositionally biased region" description="Pro residues" evidence="5">
    <location>
        <begin position="158"/>
        <end position="174"/>
    </location>
</feature>
<feature type="compositionally biased region" description="Pro residues" evidence="5">
    <location>
        <begin position="208"/>
        <end position="217"/>
    </location>
</feature>
<feature type="compositionally biased region" description="Low complexity" evidence="5">
    <location>
        <begin position="240"/>
        <end position="253"/>
    </location>
</feature>
<feature type="compositionally biased region" description="Low complexity" evidence="5">
    <location>
        <begin position="262"/>
        <end position="273"/>
    </location>
</feature>
<feature type="compositionally biased region" description="Pro residues" evidence="5">
    <location>
        <begin position="345"/>
        <end position="374"/>
    </location>
</feature>
<feature type="compositionally biased region" description="Low complexity" evidence="5">
    <location>
        <begin position="378"/>
        <end position="396"/>
    </location>
</feature>
<feature type="compositionally biased region" description="Polar residues" evidence="5">
    <location>
        <begin position="416"/>
        <end position="437"/>
    </location>
</feature>
<feature type="compositionally biased region" description="Basic residues" evidence="5">
    <location>
        <begin position="476"/>
        <end position="491"/>
    </location>
</feature>
<feature type="compositionally biased region" description="Pro residues" evidence="5">
    <location>
        <begin position="527"/>
        <end position="539"/>
    </location>
</feature>
<feature type="compositionally biased region" description="Low complexity" evidence="5">
    <location>
        <begin position="547"/>
        <end position="584"/>
    </location>
</feature>
<feature type="compositionally biased region" description="Pro residues" evidence="5">
    <location>
        <begin position="693"/>
        <end position="703"/>
    </location>
</feature>
<feature type="compositionally biased region" description="Pro residues" evidence="5">
    <location>
        <begin position="722"/>
        <end position="737"/>
    </location>
</feature>
<feature type="compositionally biased region" description="Basic and acidic residues" evidence="5">
    <location>
        <begin position="780"/>
        <end position="824"/>
    </location>
</feature>
<feature type="compositionally biased region" description="Basic and acidic residues" evidence="5">
    <location>
        <begin position="914"/>
        <end position="932"/>
    </location>
</feature>
<feature type="site" description="Cleavage" evidence="4">
    <location>
        <begin position="109"/>
        <end position="110"/>
    </location>
</feature>
<feature type="modified residue" description="Phosphoserine" evidence="3">
    <location>
        <position position="34"/>
    </location>
</feature>
<feature type="modified residue" description="Phosphoserine" evidence="11">
    <location>
        <position position="77"/>
    </location>
</feature>
<feature type="modified residue" description="Phosphoserine" evidence="11">
    <location>
        <position position="79"/>
    </location>
</feature>
<feature type="modified residue" description="Phosphoserine" evidence="11">
    <location>
        <position position="101"/>
    </location>
</feature>
<feature type="modified residue" description="Phosphoserine" evidence="3">
    <location>
        <position position="103"/>
    </location>
</feature>
<feature type="modified residue" description="Phosphoserine" evidence="11">
    <location>
        <position position="107"/>
    </location>
</feature>
<feature type="modified residue" description="Phosphoserine" evidence="3">
    <location>
        <position position="617"/>
    </location>
</feature>
<feature type="modified residue" description="N6-acetyllysine" evidence="3">
    <location>
        <position position="626"/>
    </location>
</feature>
<feature type="modified residue" description="Phosphothreonine" evidence="3">
    <location>
        <position position="638"/>
    </location>
</feature>
<feature type="modified residue" description="Phosphoserine" evidence="3">
    <location>
        <position position="646"/>
    </location>
</feature>
<feature type="modified residue" description="Phosphothreonine" evidence="3">
    <location>
        <position position="654"/>
    </location>
</feature>
<feature type="modified residue" description="Phosphoserine; by MAPK8" evidence="3">
    <location>
        <position position="724"/>
    </location>
</feature>
<feature type="modified residue" description="Phosphoserine" evidence="3">
    <location>
        <position position="731"/>
    </location>
</feature>
<feature type="modified residue" description="Phosphoserine" evidence="3">
    <location>
        <position position="733"/>
    </location>
</feature>
<feature type="modified residue" description="Phosphoserine" evidence="3">
    <location>
        <position position="881"/>
    </location>
</feature>
<feature type="modified residue" description="Asymmetric dimethylarginine" evidence="12">
    <location>
        <position position="1100"/>
    </location>
</feature>
<feature type="cross-link" description="Glycyl lysine isopeptide (Lys-Gly) (interchain with G-Cter in SUMO2)" evidence="3">
    <location>
        <position position="1168"/>
    </location>
</feature>
<feature type="sequence conflict" description="In Ref. 1; BAA13450." evidence="10" ref="1">
    <original>A</original>
    <variation>G</variation>
    <location>
        <position position="452"/>
    </location>
</feature>
<feature type="sequence conflict" description="In Ref. 1; BAA13450." evidence="10" ref="1">
    <original>P</original>
    <variation>A</variation>
    <location>
        <position position="495"/>
    </location>
</feature>
<feature type="sequence conflict" description="In Ref. 1; BAA13450." evidence="10" ref="1">
    <original>P</original>
    <variation>A</variation>
    <location>
        <position position="532"/>
    </location>
</feature>
<feature type="sequence conflict" description="In Ref. 1; BAA13450." evidence="10" ref="1">
    <original>S</original>
    <variation>L</variation>
    <location>
        <position position="691"/>
    </location>
</feature>
<feature type="sequence conflict" description="In Ref. 1; BAA13450." evidence="10" ref="1">
    <original>P</original>
    <variation>A</variation>
    <location>
        <position position="734"/>
    </location>
</feature>
<feature type="sequence conflict" description="In Ref. 1; BAA13450." evidence="10" ref="1">
    <original>D</original>
    <variation>T</variation>
    <location>
        <position position="766"/>
    </location>
</feature>
<feature type="sequence conflict" description="In Ref. 1; BAA13450." evidence="10" ref="1">
    <original>D</original>
    <variation>N</variation>
    <location>
        <position position="926"/>
    </location>
</feature>
<reference key="1">
    <citation type="journal article" date="1997" name="Genomics">
        <title>Molecular cloning of murine homologue dentatorubral-pallidoluysian atrophy (DRPLA) cDNA: strong conservation of a polymorphic CAG repeat in the murine gene.</title>
        <authorList>
            <person name="Oyake M."/>
            <person name="Onodera O."/>
            <person name="Shiroishi T."/>
            <person name="Takano H."/>
            <person name="Takahashi Y."/>
            <person name="Komonami R."/>
            <person name="Moriwaki K."/>
            <person name="Ikeuchi T."/>
            <person name="Igarashi S."/>
            <person name="Tanaka H."/>
            <person name="Tsuji S."/>
        </authorList>
    </citation>
    <scope>NUCLEOTIDE SEQUENCE [MRNA]</scope>
    <scope>TISSUE SPECIFICITY</scope>
    <scope>DEVELOPMENTAL STAGE</scope>
    <scope>POLYMORPHISM OF POLY-GLN REGION</scope>
</reference>
<reference key="2">
    <citation type="journal article" date="1998" name="Genome Res.">
        <title>Comparative sequence analysis of a gene-rich cluster at human chromosome 12p13 and its syntenic region in mouse chromosome 6.</title>
        <authorList>
            <person name="Ansari-Lari M.A."/>
            <person name="Oeltjen J.C."/>
            <person name="Schwartz S."/>
            <person name="Zhang Z."/>
            <person name="Muzny D.M."/>
            <person name="Lu J."/>
            <person name="Gorrell J.H."/>
            <person name="Chinault A.C."/>
            <person name="Belmont J.W."/>
            <person name="Miller W."/>
            <person name="Gibbs R.A."/>
        </authorList>
    </citation>
    <scope>NUCLEOTIDE SEQUENCE [GENOMIC DNA]</scope>
</reference>
<reference key="3">
    <citation type="submission" date="2005-07" db="EMBL/GenBank/DDBJ databases">
        <authorList>
            <person name="Mural R.J."/>
            <person name="Adams M.D."/>
            <person name="Myers E.W."/>
            <person name="Smith H.O."/>
            <person name="Venter J.C."/>
        </authorList>
    </citation>
    <scope>NUCLEOTIDE SEQUENCE [LARGE SCALE GENOMIC DNA]</scope>
</reference>
<reference key="4">
    <citation type="journal article" date="2004" name="Genome Res.">
        <title>The status, quality, and expansion of the NIH full-length cDNA project: the Mammalian Gene Collection (MGC).</title>
        <authorList>
            <consortium name="The MGC Project Team"/>
        </authorList>
    </citation>
    <scope>NUCLEOTIDE SEQUENCE [LARGE SCALE MRNA]</scope>
    <source>
        <strain>C57BL/6J</strain>
        <tissue>Brain</tissue>
    </source>
</reference>
<reference key="5">
    <citation type="journal article" date="2006" name="Genes Dev.">
        <title>Nuclear receptor TLX prevents retinal dystrophy and recruits the corepressor atrophin1.</title>
        <authorList>
            <person name="Zhang C.L."/>
            <person name="Zou Y."/>
            <person name="Yu R.T."/>
            <person name="Gage F.H."/>
            <person name="Evans R.M."/>
        </authorList>
    </citation>
    <scope>INTERACTION WITH NR2E1</scope>
    <scope>FUNCTION</scope>
</reference>
<reference key="6">
    <citation type="journal article" date="2009" name="Hum. Mol. Genet.">
        <title>Severe neurological phenotypes of Q129 DRPLA transgenic mice serendipitously created by en masse expansion of CAG repeats in Q76 DRPLA mice.</title>
        <authorList>
            <person name="Sato T."/>
            <person name="Miura M."/>
            <person name="Yamada M."/>
            <person name="Yoshida T."/>
            <person name="Wood J.D."/>
            <person name="Yazawa I."/>
            <person name="Masuda M."/>
            <person name="Suzuki T."/>
            <person name="Shin R.M."/>
            <person name="Yau H.J."/>
            <person name="Liu F.C."/>
            <person name="Shimohata T."/>
            <person name="Onodera O."/>
            <person name="Ross C.A."/>
            <person name="Katsuki M."/>
            <person name="Takahashi H."/>
            <person name="Kano M."/>
            <person name="Aosaki T."/>
            <person name="Tsuji S."/>
        </authorList>
    </citation>
    <scope>CHARACTERISTICS OF THE MOUSE MODEL OF DRPLA</scope>
</reference>
<reference key="7">
    <citation type="journal article" date="2009" name="J. Biol. Chem.">
        <title>Atrophin proteins interact with the Fat1 cadherin and regulate migration and orientation in vascular smooth muscle cells.</title>
        <authorList>
            <person name="Hou R."/>
            <person name="Sibinga N.E."/>
        </authorList>
    </citation>
    <scope>INTERACTION WITH FAT1</scope>
    <scope>INDUCTION</scope>
    <scope>FUNCTION</scope>
</reference>
<reference key="8">
    <citation type="journal article" date="2010" name="Cell">
        <title>A tissue-specific atlas of mouse protein phosphorylation and expression.</title>
        <authorList>
            <person name="Huttlin E.L."/>
            <person name="Jedrychowski M.P."/>
            <person name="Elias J.E."/>
            <person name="Goswami T."/>
            <person name="Rad R."/>
            <person name="Beausoleil S.A."/>
            <person name="Villen J."/>
            <person name="Haas W."/>
            <person name="Sowa M.E."/>
            <person name="Gygi S.P."/>
        </authorList>
    </citation>
    <scope>PHOSPHORYLATION [LARGE SCALE ANALYSIS] AT SER-77; SER-79; SER-101 AND SER-107</scope>
    <scope>IDENTIFICATION BY MASS SPECTROMETRY [LARGE SCALE ANALYSIS]</scope>
    <source>
        <tissue>Brain</tissue>
        <tissue>Brown adipose tissue</tissue>
        <tissue>Kidney</tissue>
        <tissue>Liver</tissue>
        <tissue>Lung</tissue>
        <tissue>Spleen</tissue>
        <tissue>Testis</tissue>
    </source>
</reference>
<reference key="9">
    <citation type="journal article" date="2014" name="Mol. Cell. Proteomics">
        <title>Immunoaffinity enrichment and mass spectrometry analysis of protein methylation.</title>
        <authorList>
            <person name="Guo A."/>
            <person name="Gu H."/>
            <person name="Zhou J."/>
            <person name="Mulhern D."/>
            <person name="Wang Y."/>
            <person name="Lee K.A."/>
            <person name="Yang V."/>
            <person name="Aguiar M."/>
            <person name="Kornhauser J."/>
            <person name="Jia X."/>
            <person name="Ren J."/>
            <person name="Beausoleil S.A."/>
            <person name="Silva J.C."/>
            <person name="Vemulapalli V."/>
            <person name="Bedford M.T."/>
            <person name="Comb M.J."/>
        </authorList>
    </citation>
    <scope>METHYLATION [LARGE SCALE ANALYSIS] AT ARG-1100</scope>
    <scope>IDENTIFICATION BY MASS SPECTROMETRY [LARGE SCALE ANALYSIS]</scope>
    <source>
        <tissue>Embryo</tissue>
    </source>
</reference>
<proteinExistence type="evidence at protein level"/>
<accession>O35126</accession>
<accession>P70200</accession>
<accession>Q80YQ0</accession>
<protein>
    <recommendedName>
        <fullName>Atrophin-1</fullName>
    </recommendedName>
    <alternativeName>
        <fullName>Dentatorubral-pallidoluysian atrophy protein homolog</fullName>
    </alternativeName>
</protein>
<dbReference type="EMBL" id="D87744">
    <property type="protein sequence ID" value="BAA13450.1"/>
    <property type="molecule type" value="mRNA"/>
</dbReference>
<dbReference type="EMBL" id="AC002397">
    <property type="protein sequence ID" value="AAC36003.1"/>
    <property type="molecule type" value="Genomic_DNA"/>
</dbReference>
<dbReference type="EMBL" id="CH466523">
    <property type="protein sequence ID" value="EDK99754.1"/>
    <property type="molecule type" value="Genomic_DNA"/>
</dbReference>
<dbReference type="EMBL" id="CH466523">
    <property type="protein sequence ID" value="EDK99755.1"/>
    <property type="molecule type" value="Genomic_DNA"/>
</dbReference>
<dbReference type="EMBL" id="BC050920">
    <property type="protein sequence ID" value="AAH50920.2"/>
    <property type="molecule type" value="mRNA"/>
</dbReference>
<dbReference type="EMBL" id="BC053051">
    <property type="protein sequence ID" value="AAH53051.1"/>
    <property type="molecule type" value="mRNA"/>
</dbReference>
<dbReference type="CCDS" id="CCDS20526.1"/>
<dbReference type="RefSeq" id="NP_031907.2">
    <property type="nucleotide sequence ID" value="NM_007881.4"/>
</dbReference>
<dbReference type="SMR" id="O35126"/>
<dbReference type="BioGRID" id="199314">
    <property type="interactions" value="4"/>
</dbReference>
<dbReference type="FunCoup" id="O35126">
    <property type="interactions" value="2060"/>
</dbReference>
<dbReference type="STRING" id="10090.ENSMUSP00000085695"/>
<dbReference type="GlyGen" id="O35126">
    <property type="glycosylation" value="5 sites, 1 N-linked glycan (1 site), 1 O-linked glycan (4 sites)"/>
</dbReference>
<dbReference type="iPTMnet" id="O35126"/>
<dbReference type="PhosphoSitePlus" id="O35126"/>
<dbReference type="jPOST" id="O35126"/>
<dbReference type="PaxDb" id="10090-ENSMUSP00000085695"/>
<dbReference type="PeptideAtlas" id="O35126"/>
<dbReference type="ProteomicsDB" id="277192"/>
<dbReference type="Pumba" id="O35126"/>
<dbReference type="DNASU" id="13498"/>
<dbReference type="Ensembl" id="ENSMUST00000088357.12">
    <property type="protein sequence ID" value="ENSMUSP00000085695.6"/>
    <property type="gene ID" value="ENSMUSG00000004263.16"/>
</dbReference>
<dbReference type="Ensembl" id="ENSMUST00000129411.7">
    <property type="protein sequence ID" value="ENSMUSP00000115407.2"/>
    <property type="gene ID" value="ENSMUSG00000107478.2"/>
</dbReference>
<dbReference type="GeneID" id="13498"/>
<dbReference type="KEGG" id="mmu:13498"/>
<dbReference type="UCSC" id="uc009drq.1">
    <property type="organism name" value="mouse"/>
</dbReference>
<dbReference type="AGR" id="MGI:104725"/>
<dbReference type="CTD" id="1822"/>
<dbReference type="MGI" id="MGI:104725">
    <property type="gene designation" value="Atn1"/>
</dbReference>
<dbReference type="VEuPathDB" id="HostDB:ENSMUSG00000004263"/>
<dbReference type="VEuPathDB" id="HostDB:ENSMUSG00000107478"/>
<dbReference type="eggNOG" id="KOG2133">
    <property type="taxonomic scope" value="Eukaryota"/>
</dbReference>
<dbReference type="GeneTree" id="ENSGT00940000153615"/>
<dbReference type="HOGENOM" id="CLU_005292_0_0_1"/>
<dbReference type="InParanoid" id="O35126"/>
<dbReference type="OMA" id="QDAIHAX"/>
<dbReference type="OrthoDB" id="6147534at2759"/>
<dbReference type="PhylomeDB" id="O35126"/>
<dbReference type="TreeFam" id="TF328554"/>
<dbReference type="BioGRID-ORCS" id="13498">
    <property type="hits" value="3 hits in 80 CRISPR screens"/>
</dbReference>
<dbReference type="ChiTaRS" id="Atn1">
    <property type="organism name" value="mouse"/>
</dbReference>
<dbReference type="PRO" id="PR:O35126"/>
<dbReference type="Proteomes" id="UP000000589">
    <property type="component" value="Chromosome 6"/>
</dbReference>
<dbReference type="RNAct" id="O35126">
    <property type="molecule type" value="protein"/>
</dbReference>
<dbReference type="Bgee" id="ENSMUSG00000004263">
    <property type="expression patterns" value="Expressed in embryonic brain and 190 other cell types or tissues"/>
</dbReference>
<dbReference type="ExpressionAtlas" id="O35126">
    <property type="expression patterns" value="baseline and differential"/>
</dbReference>
<dbReference type="GO" id="GO:0070161">
    <property type="term" value="C:anchoring junction"/>
    <property type="evidence" value="ECO:0007669"/>
    <property type="project" value="UniProtKB-SubCell"/>
</dbReference>
<dbReference type="GO" id="GO:0005737">
    <property type="term" value="C:cytoplasm"/>
    <property type="evidence" value="ECO:0000314"/>
    <property type="project" value="MGI"/>
</dbReference>
<dbReference type="GO" id="GO:0016363">
    <property type="term" value="C:nuclear matrix"/>
    <property type="evidence" value="ECO:0007669"/>
    <property type="project" value="Ensembl"/>
</dbReference>
<dbReference type="GO" id="GO:0005654">
    <property type="term" value="C:nucleoplasm"/>
    <property type="evidence" value="ECO:0000304"/>
    <property type="project" value="Reactome"/>
</dbReference>
<dbReference type="GO" id="GO:0005634">
    <property type="term" value="C:nucleus"/>
    <property type="evidence" value="ECO:0000314"/>
    <property type="project" value="MGI"/>
</dbReference>
<dbReference type="GO" id="GO:0048471">
    <property type="term" value="C:perinuclear region of cytoplasm"/>
    <property type="evidence" value="ECO:0007669"/>
    <property type="project" value="UniProtKB-SubCell"/>
</dbReference>
<dbReference type="GO" id="GO:0019904">
    <property type="term" value="F:protein domain specific binding"/>
    <property type="evidence" value="ECO:0007669"/>
    <property type="project" value="Ensembl"/>
</dbReference>
<dbReference type="GO" id="GO:0003713">
    <property type="term" value="F:transcription coactivator activity"/>
    <property type="evidence" value="ECO:0000314"/>
    <property type="project" value="MGI"/>
</dbReference>
<dbReference type="GO" id="GO:0003714">
    <property type="term" value="F:transcription corepressor activity"/>
    <property type="evidence" value="ECO:0000316"/>
    <property type="project" value="MGI"/>
</dbReference>
<dbReference type="GO" id="GO:0001906">
    <property type="term" value="P:cell killing"/>
    <property type="evidence" value="ECO:0000314"/>
    <property type="project" value="MGI"/>
</dbReference>
<dbReference type="GO" id="GO:0016477">
    <property type="term" value="P:cell migration"/>
    <property type="evidence" value="ECO:0000314"/>
    <property type="project" value="UniProtKB"/>
</dbReference>
<dbReference type="GO" id="GO:0008340">
    <property type="term" value="P:determination of adult lifespan"/>
    <property type="evidence" value="ECO:0000315"/>
    <property type="project" value="MGI"/>
</dbReference>
<dbReference type="GO" id="GO:0030011">
    <property type="term" value="P:maintenance of cell polarity"/>
    <property type="evidence" value="ECO:0000314"/>
    <property type="project" value="UniProtKB"/>
</dbReference>
<dbReference type="GO" id="GO:0008584">
    <property type="term" value="P:male gonad development"/>
    <property type="evidence" value="ECO:0000315"/>
    <property type="project" value="MGI"/>
</dbReference>
<dbReference type="GO" id="GO:0035264">
    <property type="term" value="P:multicellular organism growth"/>
    <property type="evidence" value="ECO:0000315"/>
    <property type="project" value="MGI"/>
</dbReference>
<dbReference type="GO" id="GO:0000122">
    <property type="term" value="P:negative regulation of transcription by RNA polymerase II"/>
    <property type="evidence" value="ECO:0000314"/>
    <property type="project" value="MGI"/>
</dbReference>
<dbReference type="GO" id="GO:0051402">
    <property type="term" value="P:neuron apoptotic process"/>
    <property type="evidence" value="ECO:0007669"/>
    <property type="project" value="Ensembl"/>
</dbReference>
<dbReference type="GO" id="GO:0009791">
    <property type="term" value="P:post-embryonic development"/>
    <property type="evidence" value="ECO:0000315"/>
    <property type="project" value="MGI"/>
</dbReference>
<dbReference type="GO" id="GO:0032094">
    <property type="term" value="P:response to food"/>
    <property type="evidence" value="ECO:0000315"/>
    <property type="project" value="MGI"/>
</dbReference>
<dbReference type="GO" id="GO:0007283">
    <property type="term" value="P:spermatogenesis"/>
    <property type="evidence" value="ECO:0000315"/>
    <property type="project" value="MGI"/>
</dbReference>
<dbReference type="InterPro" id="IPR017993">
    <property type="entry name" value="Atrophin-1"/>
</dbReference>
<dbReference type="InterPro" id="IPR002951">
    <property type="entry name" value="Atrophin-like"/>
</dbReference>
<dbReference type="PANTHER" id="PTHR13859:SF9">
    <property type="entry name" value="ATROPHIN-1"/>
    <property type="match status" value="1"/>
</dbReference>
<dbReference type="PANTHER" id="PTHR13859">
    <property type="entry name" value="ATROPHIN-RELATED"/>
    <property type="match status" value="1"/>
</dbReference>
<dbReference type="Pfam" id="PF03154">
    <property type="entry name" value="Atrophin-1"/>
    <property type="match status" value="2"/>
</dbReference>
<dbReference type="PRINTS" id="PR01222">
    <property type="entry name" value="ATROPHIN"/>
</dbReference>
<evidence type="ECO:0000250" key="1"/>
<evidence type="ECO:0000250" key="2">
    <source>
        <dbReference type="UniProtKB" id="P54258"/>
    </source>
</evidence>
<evidence type="ECO:0000250" key="3">
    <source>
        <dbReference type="UniProtKB" id="P54259"/>
    </source>
</evidence>
<evidence type="ECO:0000255" key="4"/>
<evidence type="ECO:0000256" key="5">
    <source>
        <dbReference type="SAM" id="MobiDB-lite"/>
    </source>
</evidence>
<evidence type="ECO:0000269" key="6">
    <source>
    </source>
</evidence>
<evidence type="ECO:0000269" key="7">
    <source>
    </source>
</evidence>
<evidence type="ECO:0000269" key="8">
    <source>
    </source>
</evidence>
<evidence type="ECO:0000269" key="9">
    <source>
    </source>
</evidence>
<evidence type="ECO:0000305" key="10"/>
<evidence type="ECO:0007744" key="11">
    <source>
    </source>
</evidence>
<evidence type="ECO:0007744" key="12">
    <source>
    </source>
</evidence>
<sequence length="1175" mass="123724">MKTRQNKDSMSMRSGRKKEAPGPREELRSRGRASPGGVSTSSSDGKAEKSRQTAKKARIEEPSAPKASKQGRSEEISESESEETSAPKKTKTEQELPRPQSPSDLDSLDGRSINDDGSSDPRDIDQDNRSTSPSIYSPGSVENDSDSSSGLSQGPARPYHPPPLFPPSPPPPDSTPRQPESGFEPHPSVPPTGYHAPMEPPTSRLFQGPPPGAPPTHPQLYPGNASGGVLSGPPMGPKGGAAASSVGAPSGGKQHPPPTTPIPISSSGASGAPPAKPPSAPVGGGSLPSAPPPASFPHVTPNLPPPPALRPLNNASASPPGMGAQPIPGHLPSPHAMGQGMSGLPPGPEKGPTLAPSPHPLPPASSSAPGPPMRYPYSSSSSSAAASSSSSSSSASQYPASQALPSYPHSFPPPTSMSVSNQPPKYTQPSLPSQAVWSQGPPPPPPYGRLLANNNTHPGPFPPTGGQSTAHPAAPTHHHHQQQPQQQHHHGNSGPPPPGAYPHPLESSNSHHAHPYNMSPSLGSLRPYPPGPAHLPPPHGQVSYNQAGPNGPPVSSSNSSGSSSQASYSCSHPSSSQGPQGASYPFPPVPPVTTSSATLSTVIATVASSPAGYKTASPPGPPQYSKRAPSPGSYKTATPPGYKPGSPPSFRTGTPPGYRGTSPPAGPGTFKPGSPTVGPGPLPPAGPSSLSSLPPPPAAPTTGPPLTATQIKQEPAEEYEPPESPVPPARSPSPPPKVVDVPSHASQSARFNKHLDRGFNSCARSDLYFVPLEGSKLAKKRADLVEKVRREAEQRAREEKEREREREREKEREREKERELERSVKLAQEGRAPVECPSLGPVPHRPPFEPGSAVATVPPYLGPDTPALRTLSEYARPHVMSPGNRNHPFYVPLGAVDPGLLGYNVPALYSSDPAAREREREARERDLRDRLKPGFEVKPSELEPLHGVPGPGLDPFPRHGGLALQPGPPGLHPFPFHPSLGPLERERLALAAGPALRPDMSYAERLAAERQHAERVAALGNDPLARLQMLNVTPHHHQHSHIHSHLHLHQQDAIHAASASVHPLIDPLASGSHLTRIPYPAGTLPNPLLPHPLHENEVLRHQLFAAPYRDLPASLSAPMSAAHQLQAMHAQSAELQRLALEQQQWLHAHHPLHSVPLPAQEDYYSHLKKESDKPL</sequence>
<gene>
    <name type="primary">Atn1</name>
    <name type="synonym">Drpla</name>
</gene>
<name>ATN1_MOUSE</name>
<comment type="function">
    <text evidence="3 6 8">Transcriptional corepressor. Corepressor of MTG8 transcriptional repression. Has some intrinsic repression activity which is independent of the number of the poly-Q repeats (By similarity). Recruits NR2E1 to repress transcription. Promotes vascular smooth cell (VSMC) migration and orientation.</text>
</comment>
<comment type="subunit">
    <text evidence="3 6 8">Interacts with BAIAP2, WWP1, WWP2, WWP3 and RERE. Interacts (via its N-terminus) with MTG8; the interaction enhances transcriptional repression of MTG8. Interacts with PQBP1 (By similarity). Interacts with NR2E1; the interaction represses the transcriptional activity of NR2E1. Interacts with FAT1 (via a C-terminal domain).</text>
</comment>
<comment type="subcellular location">
    <subcellularLocation>
        <location evidence="2">Cytoplasm</location>
        <location evidence="2">Perinuclear region</location>
    </subcellularLocation>
    <subcellularLocation>
        <location evidence="2">Cell junction</location>
    </subcellularLocation>
    <subcellularLocation>
        <location evidence="2">Nucleus</location>
    </subcellularLocation>
    <text evidence="2">Shuttles between nucleus and cytoplasm. Colocalizes with FAT1 in the perinuclear area, at cell-cell junctions and leading edges of cells. Colocalizes with MTG8 in discrete nuclear dots (By similarity).</text>
</comment>
<comment type="tissue specificity">
    <text evidence="9">Widely expressed. Most abundant in the brain.</text>
</comment>
<comment type="developmental stage">
    <text evidence="9">Expressed as early as 5 days and thereafter shows little variation throughout 17 days.</text>
</comment>
<comment type="induction">
    <text evidence="8">In vascular smooth muscle, induced by angiotensin II, FGF; PGF and IL1B.</text>
</comment>
<comment type="PTM">
    <text evidence="1">Phosphorylated in vitro by MAPK8/JNK1 on Ser-724.</text>
</comment>
<comment type="polymorphism">
    <text>The poly-Gln region of Atn1 is polymorphic (3 to 8 repeats).</text>
</comment>
<comment type="miscellaneous">
    <text evidence="7">A mouse model of DRPLA with 129 CAG repeats (Q129) exhibits severe neurological defects similar to those of juvenile-onset DRPLA patients including age-dependent and region-specific presynaptic dysfunction in the globus pallidus and cerebellum. Progressive shrinkage of distal dendrites of Purkinje cells and decreased currents through alpha-amino-3-hydroxy-5-methyl-4-isoxazolepropionic acid and gamma-aminobutyrate type A receptors in CA1 neurons is observed. There is progressive brain atrophy.</text>
</comment>
<organism>
    <name type="scientific">Mus musculus</name>
    <name type="common">Mouse</name>
    <dbReference type="NCBI Taxonomy" id="10090"/>
    <lineage>
        <taxon>Eukaryota</taxon>
        <taxon>Metazoa</taxon>
        <taxon>Chordata</taxon>
        <taxon>Craniata</taxon>
        <taxon>Vertebrata</taxon>
        <taxon>Euteleostomi</taxon>
        <taxon>Mammalia</taxon>
        <taxon>Eutheria</taxon>
        <taxon>Euarchontoglires</taxon>
        <taxon>Glires</taxon>
        <taxon>Rodentia</taxon>
        <taxon>Myomorpha</taxon>
        <taxon>Muroidea</taxon>
        <taxon>Muridae</taxon>
        <taxon>Murinae</taxon>
        <taxon>Mus</taxon>
        <taxon>Mus</taxon>
    </lineage>
</organism>